<sequence length="147" mass="16278">MRSLLVLVLCFLPLAALGKVYGRCELAAAMKRHGLDKYQGYSLGNWVCAAKFESNFNTQATNRNTDGSTDYGILQINSRWWCNDGRTPGSRNLCNIPCSALLSSDITASVNCAKKIVSDVHGMNAWVAWRNRCKGTDVNAWIRGCRL</sequence>
<proteinExistence type="evidence at protein level"/>
<name>LYSC_COTJA</name>
<keyword id="KW-0002">3D-structure</keyword>
<keyword id="KW-0929">Antimicrobial</keyword>
<keyword id="KW-0081">Bacteriolytic enzyme</keyword>
<keyword id="KW-0903">Direct protein sequencing</keyword>
<keyword id="KW-1015">Disulfide bond</keyword>
<keyword id="KW-0326">Glycosidase</keyword>
<keyword id="KW-0378">Hydrolase</keyword>
<keyword id="KW-1185">Reference proteome</keyword>
<keyword id="KW-0964">Secreted</keyword>
<keyword id="KW-0732">Signal</keyword>
<accession>P00701</accession>
<reference key="1">
    <citation type="journal article" date="1986" name="J. Biol. Chem.">
        <title>Evolutionary shift in the site of cleavage of prelysozyme.</title>
        <authorList>
            <person name="Weisman L.S."/>
            <person name="Krummel B.M."/>
            <person name="Wilson A.C."/>
        </authorList>
    </citation>
    <scope>PROTEIN SEQUENCE OF 1-18 (PRECURSOR PROTEIN)</scope>
</reference>
<reference key="2">
    <citation type="journal article" date="1969" name="J. Biochem.">
        <title>The amino acid sequence of quail lysozyme.</title>
        <authorList>
            <person name="Kaneda M."/>
            <person name="Kato I."/>
            <person name="Tominaga N."/>
            <person name="Titani K."/>
            <person name="Narita K."/>
        </authorList>
    </citation>
    <scope>PROTEIN SEQUENCE OF 19-147</scope>
</reference>
<reference key="3">
    <citation type="submission" date="2006-09" db="UniProtKB">
        <title>Quail lysozyme II.</title>
        <authorList>
            <person name="Thammasirirak S."/>
            <person name="Preecharram S."/>
            <person name="Phonkham P."/>
            <person name="Daduang S."/>
            <person name="Araki T."/>
            <person name="Svasti J."/>
        </authorList>
    </citation>
    <scope>PROTEIN SEQUENCE OF 19-147</scope>
    <scope>CATALYTIC ACTIVITY</scope>
    <source>
        <tissue>Egg white</tissue>
    </source>
</reference>
<reference key="4">
    <citation type="submission" date="1993-06" db="PDB data bank">
        <authorList>
            <person name="Houdusse A."/>
            <person name="Bentley G.A."/>
            <person name="Poljak R.J."/>
            <person name="Souchon H."/>
            <person name="Zhang Z."/>
        </authorList>
    </citation>
    <scope>X-RAY CRYSTALLOGRAPHY (1.4 ANGSTROMS) OF 19-147</scope>
</reference>
<gene>
    <name type="primary">LYZ</name>
</gene>
<organism>
    <name type="scientific">Coturnix japonica</name>
    <name type="common">Japanese quail</name>
    <name type="synonym">Coturnix coturnix japonica</name>
    <dbReference type="NCBI Taxonomy" id="93934"/>
    <lineage>
        <taxon>Eukaryota</taxon>
        <taxon>Metazoa</taxon>
        <taxon>Chordata</taxon>
        <taxon>Craniata</taxon>
        <taxon>Vertebrata</taxon>
        <taxon>Euteleostomi</taxon>
        <taxon>Archelosauria</taxon>
        <taxon>Archosauria</taxon>
        <taxon>Dinosauria</taxon>
        <taxon>Saurischia</taxon>
        <taxon>Theropoda</taxon>
        <taxon>Coelurosauria</taxon>
        <taxon>Aves</taxon>
        <taxon>Neognathae</taxon>
        <taxon>Galloanserae</taxon>
        <taxon>Galliformes</taxon>
        <taxon>Phasianidae</taxon>
        <taxon>Perdicinae</taxon>
        <taxon>Coturnix</taxon>
    </lineage>
</organism>
<dbReference type="EC" id="3.2.1.17"/>
<dbReference type="PIR" id="A91922">
    <property type="entry name" value="LZQJE"/>
</dbReference>
<dbReference type="PIR" id="JU0237">
    <property type="entry name" value="JU0237"/>
</dbReference>
<dbReference type="PDB" id="2IHL">
    <property type="method" value="X-ray"/>
    <property type="resolution" value="1.40 A"/>
    <property type="chains" value="A=19-147"/>
</dbReference>
<dbReference type="PDBsum" id="2IHL"/>
<dbReference type="SMR" id="P00701"/>
<dbReference type="CAZy" id="GH22">
    <property type="family name" value="Glycoside Hydrolase Family 22"/>
</dbReference>
<dbReference type="ABCD" id="P00701">
    <property type="antibodies" value="1 sequenced antibody"/>
</dbReference>
<dbReference type="EvolutionaryTrace" id="P00701"/>
<dbReference type="Proteomes" id="UP000694412">
    <property type="component" value="Unplaced"/>
</dbReference>
<dbReference type="GO" id="GO:0005576">
    <property type="term" value="C:extracellular region"/>
    <property type="evidence" value="ECO:0007669"/>
    <property type="project" value="UniProtKB-SubCell"/>
</dbReference>
<dbReference type="GO" id="GO:0003796">
    <property type="term" value="F:lysozyme activity"/>
    <property type="evidence" value="ECO:0007669"/>
    <property type="project" value="UniProtKB-EC"/>
</dbReference>
<dbReference type="GO" id="GO:0050829">
    <property type="term" value="P:defense response to Gram-negative bacterium"/>
    <property type="evidence" value="ECO:0007669"/>
    <property type="project" value="TreeGrafter"/>
</dbReference>
<dbReference type="GO" id="GO:0050830">
    <property type="term" value="P:defense response to Gram-positive bacterium"/>
    <property type="evidence" value="ECO:0007669"/>
    <property type="project" value="TreeGrafter"/>
</dbReference>
<dbReference type="GO" id="GO:0031640">
    <property type="term" value="P:killing of cells of another organism"/>
    <property type="evidence" value="ECO:0007669"/>
    <property type="project" value="UniProtKB-KW"/>
</dbReference>
<dbReference type="CDD" id="cd16897">
    <property type="entry name" value="LYZ_C"/>
    <property type="match status" value="1"/>
</dbReference>
<dbReference type="FunFam" id="1.10.530.10:FF:000001">
    <property type="entry name" value="Lysozyme C"/>
    <property type="match status" value="1"/>
</dbReference>
<dbReference type="Gene3D" id="1.10.530.10">
    <property type="match status" value="1"/>
</dbReference>
<dbReference type="InterPro" id="IPR001916">
    <property type="entry name" value="Glyco_hydro_22"/>
</dbReference>
<dbReference type="InterPro" id="IPR019799">
    <property type="entry name" value="Glyco_hydro_22_CS"/>
</dbReference>
<dbReference type="InterPro" id="IPR000974">
    <property type="entry name" value="Glyco_hydro_22_lys"/>
</dbReference>
<dbReference type="InterPro" id="IPR023346">
    <property type="entry name" value="Lysozyme-like_dom_sf"/>
</dbReference>
<dbReference type="PANTHER" id="PTHR11407">
    <property type="entry name" value="LYSOZYME C"/>
    <property type="match status" value="1"/>
</dbReference>
<dbReference type="PANTHER" id="PTHR11407:SF28">
    <property type="entry name" value="LYSOZYME C"/>
    <property type="match status" value="1"/>
</dbReference>
<dbReference type="Pfam" id="PF00062">
    <property type="entry name" value="Lys"/>
    <property type="match status" value="1"/>
</dbReference>
<dbReference type="PRINTS" id="PR00137">
    <property type="entry name" value="LYSOZYME"/>
</dbReference>
<dbReference type="PRINTS" id="PR00135">
    <property type="entry name" value="LYZLACT"/>
</dbReference>
<dbReference type="SMART" id="SM00263">
    <property type="entry name" value="LYZ1"/>
    <property type="match status" value="1"/>
</dbReference>
<dbReference type="SUPFAM" id="SSF53955">
    <property type="entry name" value="Lysozyme-like"/>
    <property type="match status" value="1"/>
</dbReference>
<dbReference type="PROSITE" id="PS00128">
    <property type="entry name" value="GLYCOSYL_HYDROL_F22_1"/>
    <property type="match status" value="1"/>
</dbReference>
<dbReference type="PROSITE" id="PS51348">
    <property type="entry name" value="GLYCOSYL_HYDROL_F22_2"/>
    <property type="match status" value="1"/>
</dbReference>
<comment type="function">
    <text>Lysozymes have primarily a bacteriolytic function; those in tissues and body fluids are associated with the monocyte-macrophage system and enhance the activity of immunoagents.</text>
</comment>
<comment type="catalytic activity">
    <reaction evidence="3">
        <text>Hydrolysis of (1-&gt;4)-beta-linkages between N-acetylmuramic acid and N-acetyl-D-glucosamine residues in a peptidoglycan and between N-acetyl-D-glucosamine residues in chitodextrins.</text>
        <dbReference type="EC" id="3.2.1.17"/>
    </reaction>
</comment>
<comment type="subunit">
    <text>Monomer.</text>
</comment>
<comment type="subcellular location">
    <subcellularLocation>
        <location>Secreted</location>
    </subcellularLocation>
</comment>
<comment type="miscellaneous">
    <text>Lysozyme C is capable of both hydrolysis and transglycosylation; it also shows a slight esterase activity. It acts rapidly on both peptide-substituted and unsubstituted peptidoglycan, and slowly on chitin oligosaccharides.</text>
</comment>
<comment type="similarity">
    <text evidence="1">Belongs to the glycosyl hydrolase 22 family.</text>
</comment>
<evidence type="ECO:0000255" key="1">
    <source>
        <dbReference type="PROSITE-ProRule" id="PRU00680"/>
    </source>
</evidence>
<evidence type="ECO:0000269" key="2">
    <source>
    </source>
</evidence>
<evidence type="ECO:0000269" key="3">
    <source ref="3"/>
</evidence>
<evidence type="ECO:0000305" key="4"/>
<evidence type="ECO:0007829" key="5">
    <source>
        <dbReference type="PDB" id="2IHL"/>
    </source>
</evidence>
<protein>
    <recommendedName>
        <fullName>Lysozyme C</fullName>
        <ecNumber>3.2.1.17</ecNumber>
    </recommendedName>
    <alternativeName>
        <fullName>1,4-beta-N-acetylmuramidase C</fullName>
    </alternativeName>
</protein>
<feature type="signal peptide" evidence="2 3">
    <location>
        <begin position="1"/>
        <end position="18"/>
    </location>
</feature>
<feature type="chain" id="PRO_0000018496" description="Lysozyme C">
    <location>
        <begin position="19"/>
        <end position="147"/>
    </location>
</feature>
<feature type="domain" description="C-type lysozyme" evidence="1">
    <location>
        <begin position="19"/>
        <end position="147"/>
    </location>
</feature>
<feature type="active site">
    <location>
        <position position="53"/>
    </location>
</feature>
<feature type="active site">
    <location>
        <position position="70"/>
    </location>
</feature>
<feature type="disulfide bond">
    <location>
        <begin position="24"/>
        <end position="145"/>
    </location>
</feature>
<feature type="disulfide bond">
    <location>
        <begin position="48"/>
        <end position="133"/>
    </location>
</feature>
<feature type="disulfide bond">
    <location>
        <begin position="82"/>
        <end position="98"/>
    </location>
</feature>
<feature type="disulfide bond">
    <location>
        <begin position="94"/>
        <end position="112"/>
    </location>
</feature>
<feature type="sequence conflict" description="In Ref. 3; AA sequence." evidence="4" ref="3">
    <original>Q</original>
    <variation>LK</variation>
    <location>
        <position position="39"/>
    </location>
</feature>
<feature type="helix" evidence="5">
    <location>
        <begin position="23"/>
        <end position="32"/>
    </location>
</feature>
<feature type="helix" evidence="5">
    <location>
        <begin position="43"/>
        <end position="54"/>
    </location>
</feature>
<feature type="strand" evidence="5">
    <location>
        <begin position="61"/>
        <end position="63"/>
    </location>
</feature>
<feature type="strand" evidence="5">
    <location>
        <begin position="69"/>
        <end position="71"/>
    </location>
</feature>
<feature type="turn" evidence="5">
    <location>
        <begin position="72"/>
        <end position="75"/>
    </location>
</feature>
<feature type="turn" evidence="5">
    <location>
        <begin position="78"/>
        <end position="80"/>
    </location>
</feature>
<feature type="helix" evidence="5">
    <location>
        <begin position="98"/>
        <end position="102"/>
    </location>
</feature>
<feature type="strand" evidence="5">
    <location>
        <begin position="103"/>
        <end position="105"/>
    </location>
</feature>
<feature type="helix" evidence="5">
    <location>
        <begin position="107"/>
        <end position="116"/>
    </location>
</feature>
<feature type="helix" evidence="5">
    <location>
        <begin position="122"/>
        <end position="125"/>
    </location>
</feature>
<feature type="helix" evidence="5">
    <location>
        <begin position="127"/>
        <end position="132"/>
    </location>
</feature>
<feature type="turn" evidence="5">
    <location>
        <begin position="133"/>
        <end position="135"/>
    </location>
</feature>
<feature type="helix" evidence="5">
    <location>
        <begin position="138"/>
        <end position="142"/>
    </location>
</feature>